<dbReference type="EMBL" id="AE017196">
    <property type="protein sequence ID" value="AAS13950.1"/>
    <property type="molecule type" value="Genomic_DNA"/>
</dbReference>
<dbReference type="RefSeq" id="WP_006279902.1">
    <property type="nucleotide sequence ID" value="NZ_OX384529.1"/>
</dbReference>
<dbReference type="SMR" id="Q73IG2"/>
<dbReference type="EnsemblBacteria" id="AAS13950">
    <property type="protein sequence ID" value="AAS13950"/>
    <property type="gene ID" value="WD_0204"/>
</dbReference>
<dbReference type="KEGG" id="wol:WD_0204"/>
<dbReference type="eggNOG" id="COG0355">
    <property type="taxonomic scope" value="Bacteria"/>
</dbReference>
<dbReference type="Proteomes" id="UP000008215">
    <property type="component" value="Chromosome"/>
</dbReference>
<dbReference type="GO" id="GO:0005886">
    <property type="term" value="C:plasma membrane"/>
    <property type="evidence" value="ECO:0007669"/>
    <property type="project" value="UniProtKB-SubCell"/>
</dbReference>
<dbReference type="GO" id="GO:0045259">
    <property type="term" value="C:proton-transporting ATP synthase complex"/>
    <property type="evidence" value="ECO:0007669"/>
    <property type="project" value="UniProtKB-KW"/>
</dbReference>
<dbReference type="GO" id="GO:0005524">
    <property type="term" value="F:ATP binding"/>
    <property type="evidence" value="ECO:0007669"/>
    <property type="project" value="UniProtKB-UniRule"/>
</dbReference>
<dbReference type="GO" id="GO:0046933">
    <property type="term" value="F:proton-transporting ATP synthase activity, rotational mechanism"/>
    <property type="evidence" value="ECO:0007669"/>
    <property type="project" value="UniProtKB-UniRule"/>
</dbReference>
<dbReference type="CDD" id="cd12152">
    <property type="entry name" value="F1-ATPase_delta"/>
    <property type="match status" value="1"/>
</dbReference>
<dbReference type="Gene3D" id="2.60.15.10">
    <property type="entry name" value="F0F1 ATP synthase delta/epsilon subunit, N-terminal"/>
    <property type="match status" value="1"/>
</dbReference>
<dbReference type="HAMAP" id="MF_00530">
    <property type="entry name" value="ATP_synth_epsil_bac"/>
    <property type="match status" value="1"/>
</dbReference>
<dbReference type="InterPro" id="IPR001469">
    <property type="entry name" value="ATP_synth_F1_dsu/esu"/>
</dbReference>
<dbReference type="InterPro" id="IPR020546">
    <property type="entry name" value="ATP_synth_F1_dsu/esu_N"/>
</dbReference>
<dbReference type="InterPro" id="IPR036771">
    <property type="entry name" value="ATPsynth_dsu/esu_N"/>
</dbReference>
<dbReference type="Pfam" id="PF02823">
    <property type="entry name" value="ATP-synt_DE_N"/>
    <property type="match status" value="1"/>
</dbReference>
<dbReference type="SUPFAM" id="SSF51344">
    <property type="entry name" value="Epsilon subunit of F1F0-ATP synthase N-terminal domain"/>
    <property type="match status" value="1"/>
</dbReference>
<accession>Q73IG2</accession>
<gene>
    <name evidence="1" type="primary">atpC</name>
    <name type="ordered locus">WD_0204</name>
</gene>
<sequence>MNTFKVQFFSPDDQISFSGVVSLSVTGLEGELMILAHHAPYLIYLLPGMITVKMSNQTEKKVVIDSGVLEVANNNCSIITSQIQVFDRAIHDEKSFKNKRISIYLSYLDEKFLS</sequence>
<evidence type="ECO:0000255" key="1">
    <source>
        <dbReference type="HAMAP-Rule" id="MF_00530"/>
    </source>
</evidence>
<keyword id="KW-0066">ATP synthesis</keyword>
<keyword id="KW-1003">Cell membrane</keyword>
<keyword id="KW-0139">CF(1)</keyword>
<keyword id="KW-0375">Hydrogen ion transport</keyword>
<keyword id="KW-0406">Ion transport</keyword>
<keyword id="KW-0472">Membrane</keyword>
<keyword id="KW-0813">Transport</keyword>
<organism>
    <name type="scientific">Wolbachia pipientis wMel</name>
    <dbReference type="NCBI Taxonomy" id="163164"/>
    <lineage>
        <taxon>Bacteria</taxon>
        <taxon>Pseudomonadati</taxon>
        <taxon>Pseudomonadota</taxon>
        <taxon>Alphaproteobacteria</taxon>
        <taxon>Rickettsiales</taxon>
        <taxon>Anaplasmataceae</taxon>
        <taxon>Wolbachieae</taxon>
        <taxon>Wolbachia</taxon>
    </lineage>
</organism>
<feature type="chain" id="PRO_0000265923" description="ATP synthase epsilon chain">
    <location>
        <begin position="1"/>
        <end position="114"/>
    </location>
</feature>
<reference key="1">
    <citation type="journal article" date="2004" name="PLoS Biol.">
        <title>Phylogenomics of the reproductive parasite Wolbachia pipientis wMel: a streamlined genome overrun by mobile genetic elements.</title>
        <authorList>
            <person name="Wu M."/>
            <person name="Sun L.V."/>
            <person name="Vamathevan J.J."/>
            <person name="Riegler M."/>
            <person name="DeBoy R.T."/>
            <person name="Brownlie J.C."/>
            <person name="McGraw E.A."/>
            <person name="Martin W."/>
            <person name="Esser C."/>
            <person name="Ahmadinejad N."/>
            <person name="Wiegand C."/>
            <person name="Madupu R."/>
            <person name="Beanan M.J."/>
            <person name="Brinkac L.M."/>
            <person name="Daugherty S.C."/>
            <person name="Durkin A.S."/>
            <person name="Kolonay J.F."/>
            <person name="Nelson W.C."/>
            <person name="Mohamoud Y."/>
            <person name="Lee P."/>
            <person name="Berry K.J."/>
            <person name="Young M.B."/>
            <person name="Utterback T.R."/>
            <person name="Weidman J.F."/>
            <person name="Nierman W.C."/>
            <person name="Paulsen I.T."/>
            <person name="Nelson K.E."/>
            <person name="Tettelin H."/>
            <person name="O'Neill S.L."/>
            <person name="Eisen J.A."/>
        </authorList>
    </citation>
    <scope>NUCLEOTIDE SEQUENCE [LARGE SCALE GENOMIC DNA]</scope>
</reference>
<comment type="function">
    <text evidence="1">Produces ATP from ADP in the presence of a proton gradient across the membrane.</text>
</comment>
<comment type="subunit">
    <text>F-type ATPases have 2 components, CF(1) - the catalytic core - and CF(0) - the membrane proton channel. CF(1) has five subunits: alpha(3), beta(3), gamma(1), delta(1), epsilon(1). CF(0) has three main subunits: a, b and c.</text>
</comment>
<comment type="subcellular location">
    <subcellularLocation>
        <location evidence="1">Cell membrane</location>
        <topology evidence="1">Peripheral membrane protein</topology>
    </subcellularLocation>
</comment>
<comment type="similarity">
    <text evidence="1">Belongs to the ATPase epsilon chain family.</text>
</comment>
<protein>
    <recommendedName>
        <fullName evidence="1">ATP synthase epsilon chain</fullName>
    </recommendedName>
    <alternativeName>
        <fullName evidence="1">ATP synthase F1 sector epsilon subunit</fullName>
    </alternativeName>
    <alternativeName>
        <fullName evidence="1">F-ATPase epsilon subunit</fullName>
    </alternativeName>
</protein>
<name>ATPE_WOLPM</name>
<proteinExistence type="inferred from homology"/>